<organism>
    <name type="scientific">Streptococcus uberis (strain ATCC BAA-854 / 0140J)</name>
    <dbReference type="NCBI Taxonomy" id="218495"/>
    <lineage>
        <taxon>Bacteria</taxon>
        <taxon>Bacillati</taxon>
        <taxon>Bacillota</taxon>
        <taxon>Bacilli</taxon>
        <taxon>Lactobacillales</taxon>
        <taxon>Streptococcaceae</taxon>
        <taxon>Streptococcus</taxon>
    </lineage>
</organism>
<reference key="1">
    <citation type="journal article" date="2009" name="BMC Genomics">
        <title>Evidence for niche adaptation in the genome of the bovine pathogen Streptococcus uberis.</title>
        <authorList>
            <person name="Ward P.N."/>
            <person name="Holden M.T.G."/>
            <person name="Leigh J.A."/>
            <person name="Lennard N."/>
            <person name="Bignell A."/>
            <person name="Barron A."/>
            <person name="Clark L."/>
            <person name="Quail M.A."/>
            <person name="Woodward J."/>
            <person name="Barrell B.G."/>
            <person name="Egan S.A."/>
            <person name="Field T.R."/>
            <person name="Maskell D."/>
            <person name="Kehoe M."/>
            <person name="Dowson C.G."/>
            <person name="Chanter N."/>
            <person name="Whatmore A.M."/>
            <person name="Bentley S.D."/>
            <person name="Parkhill J."/>
        </authorList>
    </citation>
    <scope>NUCLEOTIDE SEQUENCE [LARGE SCALE GENOMIC DNA]</scope>
    <source>
        <strain>ATCC BAA-854 / 0140J</strain>
    </source>
</reference>
<comment type="function">
    <text evidence="1">The heterodimer acts as both an ATP-dependent DNA helicase and an ATP-dependent, dual-direction single-stranded exonuclease. Recognizes the chi site generating a DNA molecule suitable for the initiation of homologous recombination. This subunit has 5' -&gt; 3' nuclease activity but not helicase activity.</text>
</comment>
<comment type="cofactor">
    <cofactor evidence="1">
        <name>Mg(2+)</name>
        <dbReference type="ChEBI" id="CHEBI:18420"/>
    </cofactor>
</comment>
<comment type="subunit">
    <text evidence="1">Heterodimer of AddA and RexB.</text>
</comment>
<comment type="miscellaneous">
    <text evidence="1">Despite having helicase-like domains, this subunit does not have helicase activity.</text>
</comment>
<comment type="similarity">
    <text evidence="1">Belongs to the helicase family. AddB/RexB type 2 subfamily.</text>
</comment>
<evidence type="ECO:0000255" key="1">
    <source>
        <dbReference type="HAMAP-Rule" id="MF_01453"/>
    </source>
</evidence>
<accession>B9DRU9</accession>
<keyword id="KW-0067">ATP-binding</keyword>
<keyword id="KW-0227">DNA damage</keyword>
<keyword id="KW-0234">DNA repair</keyword>
<keyword id="KW-0238">DNA-binding</keyword>
<keyword id="KW-0269">Exonuclease</keyword>
<keyword id="KW-0347">Helicase</keyword>
<keyword id="KW-0378">Hydrolase</keyword>
<keyword id="KW-0540">Nuclease</keyword>
<keyword id="KW-0547">Nucleotide-binding</keyword>
<keyword id="KW-1185">Reference proteome</keyword>
<protein>
    <recommendedName>
        <fullName evidence="1">ATP-dependent helicase/deoxyribonuclease subunit B</fullName>
        <ecNumber evidence="1">3.1.-.-</ecNumber>
    </recommendedName>
    <alternativeName>
        <fullName evidence="1">ATP-dependent helicase/nuclease subunit RexB</fullName>
    </alternativeName>
</protein>
<gene>
    <name evidence="1" type="primary">rexB</name>
    <name type="ordered locus">SUB0685</name>
</gene>
<dbReference type="EC" id="3.1.-.-" evidence="1"/>
<dbReference type="EMBL" id="AM946015">
    <property type="protein sequence ID" value="CAR41581.1"/>
    <property type="molecule type" value="Genomic_DNA"/>
</dbReference>
<dbReference type="RefSeq" id="WP_012658203.1">
    <property type="nucleotide sequence ID" value="NC_012004.1"/>
</dbReference>
<dbReference type="SMR" id="B9DRU9"/>
<dbReference type="STRING" id="218495.SUB0685"/>
<dbReference type="KEGG" id="sub:SUB0685"/>
<dbReference type="eggNOG" id="COG3857">
    <property type="taxonomic scope" value="Bacteria"/>
</dbReference>
<dbReference type="HOGENOM" id="CLU_007838_1_0_9"/>
<dbReference type="OrthoDB" id="9758506at2"/>
<dbReference type="Proteomes" id="UP000000449">
    <property type="component" value="Chromosome"/>
</dbReference>
<dbReference type="GO" id="GO:0008409">
    <property type="term" value="F:5'-3' exonuclease activity"/>
    <property type="evidence" value="ECO:0007669"/>
    <property type="project" value="UniProtKB-UniRule"/>
</dbReference>
<dbReference type="GO" id="GO:0005524">
    <property type="term" value="F:ATP binding"/>
    <property type="evidence" value="ECO:0007669"/>
    <property type="project" value="UniProtKB-UniRule"/>
</dbReference>
<dbReference type="GO" id="GO:0003690">
    <property type="term" value="F:double-stranded DNA binding"/>
    <property type="evidence" value="ECO:0007669"/>
    <property type="project" value="UniProtKB-UniRule"/>
</dbReference>
<dbReference type="GO" id="GO:0004386">
    <property type="term" value="F:helicase activity"/>
    <property type="evidence" value="ECO:0007669"/>
    <property type="project" value="UniProtKB-KW"/>
</dbReference>
<dbReference type="GO" id="GO:0016817">
    <property type="term" value="F:hydrolase activity, acting on acid anhydrides"/>
    <property type="evidence" value="ECO:0007669"/>
    <property type="project" value="InterPro"/>
</dbReference>
<dbReference type="GO" id="GO:0000724">
    <property type="term" value="P:double-strand break repair via homologous recombination"/>
    <property type="evidence" value="ECO:0007669"/>
    <property type="project" value="UniProtKB-UniRule"/>
</dbReference>
<dbReference type="Gene3D" id="3.90.320.10">
    <property type="match status" value="1"/>
</dbReference>
<dbReference type="Gene3D" id="3.40.50.300">
    <property type="entry name" value="P-loop containing nucleotide triphosphate hydrolases"/>
    <property type="match status" value="4"/>
</dbReference>
<dbReference type="HAMAP" id="MF_01453">
    <property type="entry name" value="AddB_type2"/>
    <property type="match status" value="1"/>
</dbReference>
<dbReference type="InterPro" id="IPR049035">
    <property type="entry name" value="ADDB_N"/>
</dbReference>
<dbReference type="InterPro" id="IPR014141">
    <property type="entry name" value="DNA_helicase_suRexB"/>
</dbReference>
<dbReference type="InterPro" id="IPR027417">
    <property type="entry name" value="P-loop_NTPase"/>
</dbReference>
<dbReference type="InterPro" id="IPR011604">
    <property type="entry name" value="PDDEXK-like_dom_sf"/>
</dbReference>
<dbReference type="InterPro" id="IPR038726">
    <property type="entry name" value="PDDEXK_AddAB-type"/>
</dbReference>
<dbReference type="InterPro" id="IPR011335">
    <property type="entry name" value="Restrct_endonuc-II-like"/>
</dbReference>
<dbReference type="NCBIfam" id="TIGR02774">
    <property type="entry name" value="rexB_recomb"/>
    <property type="match status" value="1"/>
</dbReference>
<dbReference type="PANTHER" id="PTHR30591">
    <property type="entry name" value="RECBCD ENZYME SUBUNIT RECC"/>
    <property type="match status" value="1"/>
</dbReference>
<dbReference type="PANTHER" id="PTHR30591:SF1">
    <property type="entry name" value="RECBCD ENZYME SUBUNIT RECC"/>
    <property type="match status" value="1"/>
</dbReference>
<dbReference type="Pfam" id="PF21445">
    <property type="entry name" value="ADDB_N"/>
    <property type="match status" value="1"/>
</dbReference>
<dbReference type="Pfam" id="PF12705">
    <property type="entry name" value="PDDEXK_1"/>
    <property type="match status" value="1"/>
</dbReference>
<dbReference type="SUPFAM" id="SSF52540">
    <property type="entry name" value="P-loop containing nucleoside triphosphate hydrolases"/>
    <property type="match status" value="1"/>
</dbReference>
<dbReference type="SUPFAM" id="SSF52980">
    <property type="entry name" value="Restriction endonuclease-like"/>
    <property type="match status" value="1"/>
</dbReference>
<feature type="chain" id="PRO_0000379418" description="ATP-dependent helicase/deoxyribonuclease subunit B">
    <location>
        <begin position="1"/>
        <end position="1086"/>
    </location>
</feature>
<sequence>MKLLYTDIENSLTEILVQEAEVFANSGARVFYIAPNSLSFEKERTVLEHLTKESSFSITVTRFAQMARYFTLNKQKAQKSLDDLSLTMLFHLVLHDLSQNELTIYHALKSDQTFIKQLVDLFKEMQSANLTIADIEMENLARKEDLITIFSALSRELLRYDFQQMSSLAVFQEAIRSGLLDQELAKTVVIIDGFTRFSAEEESLIHQLHQKCQEIVIGTYISSKAMKQNFTKGNLYEASIDFLRQLSVTYQVKSLYLSGEKTFKNSFTTMSRLLESQYDYSLTELTISEDIKNDVQIWQQLNQKEEIENIARDIRQKLNEGYRYKDILVLLGDVEAYQLQVGPIFDKYDIPYYLGKAESMSHHPLVQFMDSLENCRRYNWRKEDIINLLKSRMLGDFTIRECDQFESYLNYADINGFTAFSKDFTANTFNQKNEKGYDLDKINLIRKYLFSHLNQFFKSRAQKGSNILNHFLQFLSDIDFVSSFQRLSQKQSALQQEKDEEVWKSFTSILESFYNIFKDETLTQELTLMLIKSAMQAADYRVVPATLDVVSVKSYDLVEPHSKSLVYALGLTRTHFPKTVQQTGLISDQERAKTNEKWDSHHRFDISSIENSKKNHYTALSLFNAATDKLVLSYPMVLNEVVEEASPYLKLLHSFGIPIVEKQKNTFSDLENGIGNYKSLLSQWIALNQEPLTEELYQEEKSFWLVMSRYLKKQLAAKKLTFPEQKSHLATSRLSPEVLAIKYPDHQPLSLSSSALTVYHDNQYKYFLQYVLGLQELESIHPDARHHGTYLHRVFEYVVDDQRSIPFDDKIEEAIQRTNQERLFQTYYQSDAESRFSLSLLEDIAKSTASIFPITPTKVLSQEERFQLHFDEKVRVNGIIDRIDQLDDGSIGIVDYKSSQTVFDIGKFYNGLNSQLPTYLEALNTREKSKDMPPQLFGAMYLHMQDPKMDLNEFKLFDDKVVEKLYSRLTYKGIFLEREKEHLASGAYQMKSNLYSEEELRNLLDYNQFLYLKAEKEIRAGHFLINPYTEDGKTVKGDQLKAITRFEADLDLGQARMLLKLPTKEKREGFLKLMKEDMKGGKKDEI</sequence>
<proteinExistence type="inferred from homology"/>
<name>ADDB_STRU0</name>